<name>ISPD_SOLUE</name>
<feature type="chain" id="PRO_1000022949" description="2-C-methyl-D-erythritol 4-phosphate cytidylyltransferase">
    <location>
        <begin position="1"/>
        <end position="244"/>
    </location>
</feature>
<feature type="site" description="Transition state stabilizer" evidence="1">
    <location>
        <position position="15"/>
    </location>
</feature>
<feature type="site" description="Transition state stabilizer" evidence="1">
    <location>
        <position position="29"/>
    </location>
</feature>
<feature type="site" description="Positions MEP for the nucleophilic attack" evidence="1">
    <location>
        <position position="164"/>
    </location>
</feature>
<feature type="site" description="Positions MEP for the nucleophilic attack" evidence="1">
    <location>
        <position position="220"/>
    </location>
</feature>
<dbReference type="EC" id="2.7.7.60" evidence="1"/>
<dbReference type="EMBL" id="CP000473">
    <property type="protein sequence ID" value="ABJ82852.1"/>
    <property type="molecule type" value="Genomic_DNA"/>
</dbReference>
<dbReference type="SMR" id="Q027G1"/>
<dbReference type="FunCoup" id="Q027G1">
    <property type="interactions" value="511"/>
</dbReference>
<dbReference type="STRING" id="234267.Acid_1862"/>
<dbReference type="KEGG" id="sus:Acid_1862"/>
<dbReference type="eggNOG" id="COG1211">
    <property type="taxonomic scope" value="Bacteria"/>
</dbReference>
<dbReference type="HOGENOM" id="CLU_061281_2_2_0"/>
<dbReference type="InParanoid" id="Q027G1"/>
<dbReference type="OrthoDB" id="9806837at2"/>
<dbReference type="UniPathway" id="UPA00056">
    <property type="reaction ID" value="UER00093"/>
</dbReference>
<dbReference type="GO" id="GO:0050518">
    <property type="term" value="F:2-C-methyl-D-erythritol 4-phosphate cytidylyltransferase activity"/>
    <property type="evidence" value="ECO:0007669"/>
    <property type="project" value="UniProtKB-UniRule"/>
</dbReference>
<dbReference type="GO" id="GO:0019288">
    <property type="term" value="P:isopentenyl diphosphate biosynthetic process, methylerythritol 4-phosphate pathway"/>
    <property type="evidence" value="ECO:0007669"/>
    <property type="project" value="UniProtKB-UniRule"/>
</dbReference>
<dbReference type="CDD" id="cd02516">
    <property type="entry name" value="CDP-ME_synthetase"/>
    <property type="match status" value="1"/>
</dbReference>
<dbReference type="FunFam" id="3.90.550.10:FF:000003">
    <property type="entry name" value="2-C-methyl-D-erythritol 4-phosphate cytidylyltransferase"/>
    <property type="match status" value="1"/>
</dbReference>
<dbReference type="Gene3D" id="3.90.550.10">
    <property type="entry name" value="Spore Coat Polysaccharide Biosynthesis Protein SpsA, Chain A"/>
    <property type="match status" value="1"/>
</dbReference>
<dbReference type="HAMAP" id="MF_00108">
    <property type="entry name" value="IspD"/>
    <property type="match status" value="1"/>
</dbReference>
<dbReference type="InterPro" id="IPR001228">
    <property type="entry name" value="IspD"/>
</dbReference>
<dbReference type="InterPro" id="IPR034683">
    <property type="entry name" value="IspD/TarI"/>
</dbReference>
<dbReference type="InterPro" id="IPR050088">
    <property type="entry name" value="IspD/TarI_cytidylyltransf_bact"/>
</dbReference>
<dbReference type="InterPro" id="IPR029044">
    <property type="entry name" value="Nucleotide-diphossugar_trans"/>
</dbReference>
<dbReference type="NCBIfam" id="TIGR00453">
    <property type="entry name" value="ispD"/>
    <property type="match status" value="1"/>
</dbReference>
<dbReference type="PANTHER" id="PTHR32125">
    <property type="entry name" value="2-C-METHYL-D-ERYTHRITOL 4-PHOSPHATE CYTIDYLYLTRANSFERASE, CHLOROPLASTIC"/>
    <property type="match status" value="1"/>
</dbReference>
<dbReference type="PANTHER" id="PTHR32125:SF4">
    <property type="entry name" value="2-C-METHYL-D-ERYTHRITOL 4-PHOSPHATE CYTIDYLYLTRANSFERASE, CHLOROPLASTIC"/>
    <property type="match status" value="1"/>
</dbReference>
<dbReference type="Pfam" id="PF01128">
    <property type="entry name" value="IspD"/>
    <property type="match status" value="1"/>
</dbReference>
<dbReference type="SUPFAM" id="SSF53448">
    <property type="entry name" value="Nucleotide-diphospho-sugar transferases"/>
    <property type="match status" value="1"/>
</dbReference>
<evidence type="ECO:0000255" key="1">
    <source>
        <dbReference type="HAMAP-Rule" id="MF_00108"/>
    </source>
</evidence>
<gene>
    <name evidence="1" type="primary">ispD</name>
    <name type="ordered locus">Acid_1862</name>
</gene>
<accession>Q027G1</accession>
<organism>
    <name type="scientific">Solibacter usitatus (strain Ellin6076)</name>
    <dbReference type="NCBI Taxonomy" id="234267"/>
    <lineage>
        <taxon>Bacteria</taxon>
        <taxon>Pseudomonadati</taxon>
        <taxon>Acidobacteriota</taxon>
        <taxon>Terriglobia</taxon>
        <taxon>Bryobacterales</taxon>
        <taxon>Solibacteraceae</taxon>
        <taxon>Candidatus Solibacter</taxon>
    </lineage>
</organism>
<sequence length="244" mass="26563">MKVAVILPAAGLGTRMGKGTAEKAGTSRKQFMLLEGSPILMHTVRKFAASPRVGEIVIAVRAEDTEWVREVVTQEFPGGRVRVVAGGNSRQESVENALSSLSPDCELVAVHDAVRPFIDLDIMHAVFDEAAETGAAIVGVPAVDTVKQVTRGTTHVRVRATLPREKLVMAQTPQVFRHDLLLRAFQEARKDGFIGTDESSMVERLDVEVSVVPGSDRNIKITKPTDMELAHLFLREEAARSTLS</sequence>
<proteinExistence type="inferred from homology"/>
<comment type="function">
    <text evidence="1">Catalyzes the formation of 4-diphosphocytidyl-2-C-methyl-D-erythritol from CTP and 2-C-methyl-D-erythritol 4-phosphate (MEP).</text>
</comment>
<comment type="catalytic activity">
    <reaction evidence="1">
        <text>2-C-methyl-D-erythritol 4-phosphate + CTP + H(+) = 4-CDP-2-C-methyl-D-erythritol + diphosphate</text>
        <dbReference type="Rhea" id="RHEA:13429"/>
        <dbReference type="ChEBI" id="CHEBI:15378"/>
        <dbReference type="ChEBI" id="CHEBI:33019"/>
        <dbReference type="ChEBI" id="CHEBI:37563"/>
        <dbReference type="ChEBI" id="CHEBI:57823"/>
        <dbReference type="ChEBI" id="CHEBI:58262"/>
        <dbReference type="EC" id="2.7.7.60"/>
    </reaction>
</comment>
<comment type="pathway">
    <text evidence="1">Isoprenoid biosynthesis; isopentenyl diphosphate biosynthesis via DXP pathway; isopentenyl diphosphate from 1-deoxy-D-xylulose 5-phosphate: step 2/6.</text>
</comment>
<comment type="similarity">
    <text evidence="1">Belongs to the IspD/TarI cytidylyltransferase family. IspD subfamily.</text>
</comment>
<keyword id="KW-0414">Isoprene biosynthesis</keyword>
<keyword id="KW-0548">Nucleotidyltransferase</keyword>
<keyword id="KW-0808">Transferase</keyword>
<protein>
    <recommendedName>
        <fullName evidence="1">2-C-methyl-D-erythritol 4-phosphate cytidylyltransferase</fullName>
        <ecNumber evidence="1">2.7.7.60</ecNumber>
    </recommendedName>
    <alternativeName>
        <fullName evidence="1">4-diphosphocytidyl-2C-methyl-D-erythritol synthase</fullName>
    </alternativeName>
    <alternativeName>
        <fullName evidence="1">MEP cytidylyltransferase</fullName>
        <shortName evidence="1">MCT</shortName>
    </alternativeName>
</protein>
<reference key="1">
    <citation type="journal article" date="2009" name="Appl. Environ. Microbiol.">
        <title>Three genomes from the phylum Acidobacteria provide insight into the lifestyles of these microorganisms in soils.</title>
        <authorList>
            <person name="Ward N.L."/>
            <person name="Challacombe J.F."/>
            <person name="Janssen P.H."/>
            <person name="Henrissat B."/>
            <person name="Coutinho P.M."/>
            <person name="Wu M."/>
            <person name="Xie G."/>
            <person name="Haft D.H."/>
            <person name="Sait M."/>
            <person name="Badger J."/>
            <person name="Barabote R.D."/>
            <person name="Bradley B."/>
            <person name="Brettin T.S."/>
            <person name="Brinkac L.M."/>
            <person name="Bruce D."/>
            <person name="Creasy T."/>
            <person name="Daugherty S.C."/>
            <person name="Davidsen T.M."/>
            <person name="DeBoy R.T."/>
            <person name="Detter J.C."/>
            <person name="Dodson R.J."/>
            <person name="Durkin A.S."/>
            <person name="Ganapathy A."/>
            <person name="Gwinn-Giglio M."/>
            <person name="Han C.S."/>
            <person name="Khouri H."/>
            <person name="Kiss H."/>
            <person name="Kothari S.P."/>
            <person name="Madupu R."/>
            <person name="Nelson K.E."/>
            <person name="Nelson W.C."/>
            <person name="Paulsen I."/>
            <person name="Penn K."/>
            <person name="Ren Q."/>
            <person name="Rosovitz M.J."/>
            <person name="Selengut J.D."/>
            <person name="Shrivastava S."/>
            <person name="Sullivan S.A."/>
            <person name="Tapia R."/>
            <person name="Thompson L.S."/>
            <person name="Watkins K.L."/>
            <person name="Yang Q."/>
            <person name="Yu C."/>
            <person name="Zafar N."/>
            <person name="Zhou L."/>
            <person name="Kuske C.R."/>
        </authorList>
    </citation>
    <scope>NUCLEOTIDE SEQUENCE [LARGE SCALE GENOMIC DNA]</scope>
    <source>
        <strain>Ellin6076</strain>
    </source>
</reference>